<gene>
    <name type="primary">yhjJ</name>
    <name type="ordered locus">STY4190</name>
    <name type="ordered locus">t3904</name>
</gene>
<dbReference type="EMBL" id="AL513382">
    <property type="protein sequence ID" value="CAD08012.1"/>
    <property type="molecule type" value="Genomic_DNA"/>
</dbReference>
<dbReference type="EMBL" id="AE014613">
    <property type="protein sequence ID" value="AAO71378.1"/>
    <property type="molecule type" value="Genomic_DNA"/>
</dbReference>
<dbReference type="RefSeq" id="NP_458306.1">
    <property type="nucleotide sequence ID" value="NC_003198.1"/>
</dbReference>
<dbReference type="RefSeq" id="WP_001163190.1">
    <property type="nucleotide sequence ID" value="NZ_WSUR01000001.1"/>
</dbReference>
<dbReference type="SMR" id="Q8Z286"/>
<dbReference type="STRING" id="220341.gene:17588025"/>
<dbReference type="KEGG" id="stt:t3904"/>
<dbReference type="KEGG" id="sty:STY4190"/>
<dbReference type="PATRIC" id="fig|220341.7.peg.4279"/>
<dbReference type="eggNOG" id="COG0612">
    <property type="taxonomic scope" value="Bacteria"/>
</dbReference>
<dbReference type="HOGENOM" id="CLU_043932_0_0_6"/>
<dbReference type="OMA" id="FWHVQQN"/>
<dbReference type="Proteomes" id="UP000000541">
    <property type="component" value="Chromosome"/>
</dbReference>
<dbReference type="Proteomes" id="UP000002670">
    <property type="component" value="Chromosome"/>
</dbReference>
<dbReference type="GO" id="GO:0042597">
    <property type="term" value="C:periplasmic space"/>
    <property type="evidence" value="ECO:0007669"/>
    <property type="project" value="UniProtKB-SubCell"/>
</dbReference>
<dbReference type="GO" id="GO:0046872">
    <property type="term" value="F:metal ion binding"/>
    <property type="evidence" value="ECO:0007669"/>
    <property type="project" value="InterPro"/>
</dbReference>
<dbReference type="GO" id="GO:0008237">
    <property type="term" value="F:metallopeptidase activity"/>
    <property type="evidence" value="ECO:0007669"/>
    <property type="project" value="UniProtKB-KW"/>
</dbReference>
<dbReference type="GO" id="GO:0006508">
    <property type="term" value="P:proteolysis"/>
    <property type="evidence" value="ECO:0007669"/>
    <property type="project" value="UniProtKB-KW"/>
</dbReference>
<dbReference type="Gene3D" id="3.30.830.10">
    <property type="entry name" value="Metalloenzyme, LuxS/M16 peptidase-like"/>
    <property type="match status" value="2"/>
</dbReference>
<dbReference type="InterPro" id="IPR011249">
    <property type="entry name" value="Metalloenz_LuxS/M16"/>
</dbReference>
<dbReference type="InterPro" id="IPR011765">
    <property type="entry name" value="Pept_M16_N"/>
</dbReference>
<dbReference type="InterPro" id="IPR050626">
    <property type="entry name" value="Peptidase_M16"/>
</dbReference>
<dbReference type="InterPro" id="IPR007863">
    <property type="entry name" value="Peptidase_M16_C"/>
</dbReference>
<dbReference type="PANTHER" id="PTHR43690">
    <property type="entry name" value="NARDILYSIN"/>
    <property type="match status" value="1"/>
</dbReference>
<dbReference type="PANTHER" id="PTHR43690:SF17">
    <property type="entry name" value="PROTEIN YHJJ"/>
    <property type="match status" value="1"/>
</dbReference>
<dbReference type="Pfam" id="PF00675">
    <property type="entry name" value="Peptidase_M16"/>
    <property type="match status" value="1"/>
</dbReference>
<dbReference type="Pfam" id="PF05193">
    <property type="entry name" value="Peptidase_M16_C"/>
    <property type="match status" value="1"/>
</dbReference>
<dbReference type="SUPFAM" id="SSF63411">
    <property type="entry name" value="LuxS/MPP-like metallohydrolase"/>
    <property type="match status" value="2"/>
</dbReference>
<sequence>MQGTKIRLLAGSLLMLASAGYVQADALQPDPAWQQGTLANGLQWQVLATPQRPSDRIEVRLQVNTGSLTESTQQSGFSHAIPRIALTQSGGLDAAQARSLWQQGFDPKRPMPPVIVSYDSTLYSLSLPNNRNDLLKEALTYLANVSGKLTITPETVNHALSSEDMVATWPADTKEGWWRYRLKGSALLGHDPAEPLKQPVDAAKIQAFYEKWYTPDAMTLIVVGNIDARSVAEQINKTFGTLKGKRETPAPVPTLSPLRAESVSIMTDAVRQDRLSIMWDTPWQPIRESAALLRYWQADLAREALFWHIQQELTKNNAKDIGLGFDCRVLFLRAQCAINIESPNDKLNTNLSLVANELAKVRDKGLSEEEFTALVAQKNLELQKLFATYARTDTDILTGQRMRSLQNQVVDIAPEQYQKLRQNFLNSLTVDMLNQNLRQQLSQEMALILLQPQGEPEFNMKALKATWDEIMVPATAAAVEADEAHPEVTETPAAQ</sequence>
<organism>
    <name type="scientific">Salmonella typhi</name>
    <dbReference type="NCBI Taxonomy" id="90370"/>
    <lineage>
        <taxon>Bacteria</taxon>
        <taxon>Pseudomonadati</taxon>
        <taxon>Pseudomonadota</taxon>
        <taxon>Gammaproteobacteria</taxon>
        <taxon>Enterobacterales</taxon>
        <taxon>Enterobacteriaceae</taxon>
        <taxon>Salmonella</taxon>
    </lineage>
</organism>
<protein>
    <recommendedName>
        <fullName>Protein YhjJ</fullName>
    </recommendedName>
</protein>
<evidence type="ECO:0000250" key="1"/>
<evidence type="ECO:0000305" key="2"/>
<name>YHJJ_SALTI</name>
<accession>Q8Z286</accession>
<feature type="signal peptide" evidence="1">
    <location>
        <begin position="1"/>
        <end position="24"/>
    </location>
</feature>
<feature type="chain" id="PRO_0000026765" description="Protein YhjJ">
    <location>
        <begin position="25"/>
        <end position="495"/>
    </location>
</feature>
<comment type="subcellular location">
    <subcellularLocation>
        <location evidence="2">Periplasm</location>
    </subcellularLocation>
</comment>
<comment type="miscellaneous">
    <text>Has lost the active site residues.</text>
</comment>
<comment type="similarity">
    <text evidence="2">Belongs to the peptidase M16 family.</text>
</comment>
<keyword id="KW-0378">Hydrolase</keyword>
<keyword id="KW-0482">Metalloprotease</keyword>
<keyword id="KW-0574">Periplasm</keyword>
<keyword id="KW-0645">Protease</keyword>
<keyword id="KW-0732">Signal</keyword>
<keyword id="KW-0862">Zinc</keyword>
<reference key="1">
    <citation type="journal article" date="2001" name="Nature">
        <title>Complete genome sequence of a multiple drug resistant Salmonella enterica serovar Typhi CT18.</title>
        <authorList>
            <person name="Parkhill J."/>
            <person name="Dougan G."/>
            <person name="James K.D."/>
            <person name="Thomson N.R."/>
            <person name="Pickard D."/>
            <person name="Wain J."/>
            <person name="Churcher C.M."/>
            <person name="Mungall K.L."/>
            <person name="Bentley S.D."/>
            <person name="Holden M.T.G."/>
            <person name="Sebaihia M."/>
            <person name="Baker S."/>
            <person name="Basham D."/>
            <person name="Brooks K."/>
            <person name="Chillingworth T."/>
            <person name="Connerton P."/>
            <person name="Cronin A."/>
            <person name="Davis P."/>
            <person name="Davies R.M."/>
            <person name="Dowd L."/>
            <person name="White N."/>
            <person name="Farrar J."/>
            <person name="Feltwell T."/>
            <person name="Hamlin N."/>
            <person name="Haque A."/>
            <person name="Hien T.T."/>
            <person name="Holroyd S."/>
            <person name="Jagels K."/>
            <person name="Krogh A."/>
            <person name="Larsen T.S."/>
            <person name="Leather S."/>
            <person name="Moule S."/>
            <person name="O'Gaora P."/>
            <person name="Parry C."/>
            <person name="Quail M.A."/>
            <person name="Rutherford K.M."/>
            <person name="Simmonds M."/>
            <person name="Skelton J."/>
            <person name="Stevens K."/>
            <person name="Whitehead S."/>
            <person name="Barrell B.G."/>
        </authorList>
    </citation>
    <scope>NUCLEOTIDE SEQUENCE [LARGE SCALE GENOMIC DNA]</scope>
    <source>
        <strain>CT18</strain>
    </source>
</reference>
<reference key="2">
    <citation type="journal article" date="2003" name="J. Bacteriol.">
        <title>Comparative genomics of Salmonella enterica serovar Typhi strains Ty2 and CT18.</title>
        <authorList>
            <person name="Deng W."/>
            <person name="Liou S.-R."/>
            <person name="Plunkett G. III"/>
            <person name="Mayhew G.F."/>
            <person name="Rose D.J."/>
            <person name="Burland V."/>
            <person name="Kodoyianni V."/>
            <person name="Schwartz D.C."/>
            <person name="Blattner F.R."/>
        </authorList>
    </citation>
    <scope>NUCLEOTIDE SEQUENCE [LARGE SCALE GENOMIC DNA]</scope>
    <source>
        <strain>ATCC 700931 / Ty2</strain>
    </source>
</reference>
<proteinExistence type="inferred from homology"/>